<accession>Q8EMT9</accession>
<sequence length="223" mass="23892">MEKRELVNIIDYTLLHPTANKADIESFLQEVVNYGFKTIFVQPYFVPFAVNWLADHDVNVGVPVGFSLGGATTHVKVEETKEAIRNGAKEIDMLVNLGALKSGDYQMVETDIAKVVEAANGLNTKVIIETALLNQEEKISVTECIIRAGADFVKTATGFNGGGATVEDVRLLNEIGKGKIQVKAAGGIKTYEDALAIIDAGATRIGSSGAIQIIRGETSTSSY</sequence>
<protein>
    <recommendedName>
        <fullName evidence="1">Deoxyribose-phosphate aldolase 2</fullName>
        <shortName evidence="1">DERA 2</shortName>
        <ecNumber evidence="1">4.1.2.4</ecNumber>
    </recommendedName>
    <alternativeName>
        <fullName evidence="1">2-deoxy-D-ribose 5-phosphate aldolase 2</fullName>
    </alternativeName>
    <alternativeName>
        <fullName evidence="1">Phosphodeoxyriboaldolase 2</fullName>
        <shortName evidence="1">Deoxyriboaldolase 2</shortName>
    </alternativeName>
</protein>
<feature type="chain" id="PRO_0000057251" description="Deoxyribose-phosphate aldolase 2">
    <location>
        <begin position="1"/>
        <end position="223"/>
    </location>
</feature>
<feature type="active site" description="Proton donor/acceptor" evidence="1">
    <location>
        <position position="92"/>
    </location>
</feature>
<feature type="active site" description="Schiff-base intermediate with acetaldehyde" evidence="1">
    <location>
        <position position="154"/>
    </location>
</feature>
<feature type="active site" description="Proton donor/acceptor" evidence="1">
    <location>
        <position position="183"/>
    </location>
</feature>
<evidence type="ECO:0000255" key="1">
    <source>
        <dbReference type="HAMAP-Rule" id="MF_00114"/>
    </source>
</evidence>
<evidence type="ECO:0000305" key="2"/>
<gene>
    <name evidence="1" type="primary">deoC2</name>
    <name type="ordered locus">OB2751</name>
</gene>
<comment type="function">
    <text evidence="1">Catalyzes a reversible aldol reaction between acetaldehyde and D-glyceraldehyde 3-phosphate to generate 2-deoxy-D-ribose 5-phosphate.</text>
</comment>
<comment type="catalytic activity">
    <reaction evidence="1">
        <text>2-deoxy-D-ribose 5-phosphate = D-glyceraldehyde 3-phosphate + acetaldehyde</text>
        <dbReference type="Rhea" id="RHEA:12821"/>
        <dbReference type="ChEBI" id="CHEBI:15343"/>
        <dbReference type="ChEBI" id="CHEBI:59776"/>
        <dbReference type="ChEBI" id="CHEBI:62877"/>
        <dbReference type="EC" id="4.1.2.4"/>
    </reaction>
</comment>
<comment type="pathway">
    <text evidence="1">Carbohydrate degradation; 2-deoxy-D-ribose 1-phosphate degradation; D-glyceraldehyde 3-phosphate and acetaldehyde from 2-deoxy-alpha-D-ribose 1-phosphate: step 2/2.</text>
</comment>
<comment type="subcellular location">
    <subcellularLocation>
        <location evidence="1">Cytoplasm</location>
    </subcellularLocation>
</comment>
<comment type="similarity">
    <text evidence="1 2">Belongs to the DeoC/FbaB aldolase family. DeoC type 1 subfamily.</text>
</comment>
<reference key="1">
    <citation type="journal article" date="2002" name="Nucleic Acids Res.">
        <title>Genome sequence of Oceanobacillus iheyensis isolated from the Iheya Ridge and its unexpected adaptive capabilities to extreme environments.</title>
        <authorList>
            <person name="Takami H."/>
            <person name="Takaki Y."/>
            <person name="Uchiyama I."/>
        </authorList>
    </citation>
    <scope>NUCLEOTIDE SEQUENCE [LARGE SCALE GENOMIC DNA]</scope>
    <source>
        <strain>DSM 14371 / CIP 107618 / JCM 11309 / KCTC 3954 / HTE831</strain>
    </source>
</reference>
<dbReference type="EC" id="4.1.2.4" evidence="1"/>
<dbReference type="EMBL" id="BA000028">
    <property type="protein sequence ID" value="BAC14707.1"/>
    <property type="molecule type" value="Genomic_DNA"/>
</dbReference>
<dbReference type="RefSeq" id="WP_011067145.1">
    <property type="nucleotide sequence ID" value="NC_004193.1"/>
</dbReference>
<dbReference type="SMR" id="Q8EMT9"/>
<dbReference type="STRING" id="221109.gene:10735003"/>
<dbReference type="KEGG" id="oih:OB2751"/>
<dbReference type="eggNOG" id="COG0274">
    <property type="taxonomic scope" value="Bacteria"/>
</dbReference>
<dbReference type="HOGENOM" id="CLU_053595_0_1_9"/>
<dbReference type="OrthoDB" id="9778711at2"/>
<dbReference type="PhylomeDB" id="Q8EMT9"/>
<dbReference type="UniPathway" id="UPA00002">
    <property type="reaction ID" value="UER00468"/>
</dbReference>
<dbReference type="Proteomes" id="UP000000822">
    <property type="component" value="Chromosome"/>
</dbReference>
<dbReference type="GO" id="GO:0005737">
    <property type="term" value="C:cytoplasm"/>
    <property type="evidence" value="ECO:0007669"/>
    <property type="project" value="UniProtKB-SubCell"/>
</dbReference>
<dbReference type="GO" id="GO:0004139">
    <property type="term" value="F:deoxyribose-phosphate aldolase activity"/>
    <property type="evidence" value="ECO:0007669"/>
    <property type="project" value="UniProtKB-UniRule"/>
</dbReference>
<dbReference type="GO" id="GO:0006018">
    <property type="term" value="P:2-deoxyribose 1-phosphate catabolic process"/>
    <property type="evidence" value="ECO:0007669"/>
    <property type="project" value="UniProtKB-UniRule"/>
</dbReference>
<dbReference type="GO" id="GO:0016052">
    <property type="term" value="P:carbohydrate catabolic process"/>
    <property type="evidence" value="ECO:0007669"/>
    <property type="project" value="TreeGrafter"/>
</dbReference>
<dbReference type="GO" id="GO:0009264">
    <property type="term" value="P:deoxyribonucleotide catabolic process"/>
    <property type="evidence" value="ECO:0007669"/>
    <property type="project" value="InterPro"/>
</dbReference>
<dbReference type="CDD" id="cd00959">
    <property type="entry name" value="DeoC"/>
    <property type="match status" value="1"/>
</dbReference>
<dbReference type="FunFam" id="3.20.20.70:FF:000044">
    <property type="entry name" value="Deoxyribose-phosphate aldolase"/>
    <property type="match status" value="1"/>
</dbReference>
<dbReference type="Gene3D" id="3.20.20.70">
    <property type="entry name" value="Aldolase class I"/>
    <property type="match status" value="1"/>
</dbReference>
<dbReference type="HAMAP" id="MF_00114">
    <property type="entry name" value="DeoC_type1"/>
    <property type="match status" value="1"/>
</dbReference>
<dbReference type="InterPro" id="IPR013785">
    <property type="entry name" value="Aldolase_TIM"/>
</dbReference>
<dbReference type="InterPro" id="IPR011343">
    <property type="entry name" value="DeoC"/>
</dbReference>
<dbReference type="InterPro" id="IPR002915">
    <property type="entry name" value="DeoC/FbaB/LacD_aldolase"/>
</dbReference>
<dbReference type="InterPro" id="IPR028581">
    <property type="entry name" value="DeoC_typeI"/>
</dbReference>
<dbReference type="NCBIfam" id="TIGR00126">
    <property type="entry name" value="deoC"/>
    <property type="match status" value="1"/>
</dbReference>
<dbReference type="PANTHER" id="PTHR10889">
    <property type="entry name" value="DEOXYRIBOSE-PHOSPHATE ALDOLASE"/>
    <property type="match status" value="1"/>
</dbReference>
<dbReference type="PANTHER" id="PTHR10889:SF1">
    <property type="entry name" value="DEOXYRIBOSE-PHOSPHATE ALDOLASE"/>
    <property type="match status" value="1"/>
</dbReference>
<dbReference type="Pfam" id="PF01791">
    <property type="entry name" value="DeoC"/>
    <property type="match status" value="1"/>
</dbReference>
<dbReference type="PIRSF" id="PIRSF001357">
    <property type="entry name" value="DeoC"/>
    <property type="match status" value="1"/>
</dbReference>
<dbReference type="SMART" id="SM01133">
    <property type="entry name" value="DeoC"/>
    <property type="match status" value="1"/>
</dbReference>
<dbReference type="SUPFAM" id="SSF51569">
    <property type="entry name" value="Aldolase"/>
    <property type="match status" value="1"/>
</dbReference>
<name>DEOC2_OCEIH</name>
<organism>
    <name type="scientific">Oceanobacillus iheyensis (strain DSM 14371 / CIP 107618 / JCM 11309 / KCTC 3954 / HTE831)</name>
    <dbReference type="NCBI Taxonomy" id="221109"/>
    <lineage>
        <taxon>Bacteria</taxon>
        <taxon>Bacillati</taxon>
        <taxon>Bacillota</taxon>
        <taxon>Bacilli</taxon>
        <taxon>Bacillales</taxon>
        <taxon>Bacillaceae</taxon>
        <taxon>Oceanobacillus</taxon>
    </lineage>
</organism>
<proteinExistence type="inferred from homology"/>
<keyword id="KW-0963">Cytoplasm</keyword>
<keyword id="KW-0456">Lyase</keyword>
<keyword id="KW-1185">Reference proteome</keyword>
<keyword id="KW-0704">Schiff base</keyword>